<proteinExistence type="inferred from homology"/>
<gene>
    <name evidence="1" type="primary">rpsS</name>
    <name type="ordered locus">Bsph_4610</name>
</gene>
<name>RS19_LYSSC</name>
<accession>B1HMX6</accession>
<organism>
    <name type="scientific">Lysinibacillus sphaericus (strain C3-41)</name>
    <dbReference type="NCBI Taxonomy" id="444177"/>
    <lineage>
        <taxon>Bacteria</taxon>
        <taxon>Bacillati</taxon>
        <taxon>Bacillota</taxon>
        <taxon>Bacilli</taxon>
        <taxon>Bacillales</taxon>
        <taxon>Bacillaceae</taxon>
        <taxon>Lysinibacillus</taxon>
    </lineage>
</organism>
<comment type="function">
    <text evidence="1">Protein S19 forms a complex with S13 that binds strongly to the 16S ribosomal RNA.</text>
</comment>
<comment type="similarity">
    <text evidence="1">Belongs to the universal ribosomal protein uS19 family.</text>
</comment>
<evidence type="ECO:0000255" key="1">
    <source>
        <dbReference type="HAMAP-Rule" id="MF_00531"/>
    </source>
</evidence>
<evidence type="ECO:0000305" key="2"/>
<sequence>MGRSLKKGPFVDDHLMKKVEVQEASEKKQVIKTWSRRSTIFPNFIGLTIAVYDGRKHVPVYVTEDMVGHKLGEFAPTRTYKGHGADDKKTRR</sequence>
<keyword id="KW-0687">Ribonucleoprotein</keyword>
<keyword id="KW-0689">Ribosomal protein</keyword>
<keyword id="KW-0694">RNA-binding</keyword>
<keyword id="KW-0699">rRNA-binding</keyword>
<reference key="1">
    <citation type="journal article" date="2008" name="J. Bacteriol.">
        <title>Complete genome sequence of the mosquitocidal bacterium Bacillus sphaericus C3-41 and comparison with those of closely related Bacillus species.</title>
        <authorList>
            <person name="Hu X."/>
            <person name="Fan W."/>
            <person name="Han B."/>
            <person name="Liu H."/>
            <person name="Zheng D."/>
            <person name="Li Q."/>
            <person name="Dong W."/>
            <person name="Yan J."/>
            <person name="Gao M."/>
            <person name="Berry C."/>
            <person name="Yuan Z."/>
        </authorList>
    </citation>
    <scope>NUCLEOTIDE SEQUENCE [LARGE SCALE GENOMIC DNA]</scope>
    <source>
        <strain>C3-41</strain>
    </source>
</reference>
<dbReference type="EMBL" id="CP000817">
    <property type="protein sequence ID" value="ACA42054.1"/>
    <property type="molecule type" value="Genomic_DNA"/>
</dbReference>
<dbReference type="RefSeq" id="WP_008181911.1">
    <property type="nucleotide sequence ID" value="NC_010382.1"/>
</dbReference>
<dbReference type="SMR" id="B1HMX6"/>
<dbReference type="EnsemblBacteria" id="ACA42054">
    <property type="protein sequence ID" value="ACA42054"/>
    <property type="gene ID" value="Bsph_4610"/>
</dbReference>
<dbReference type="GeneID" id="29439390"/>
<dbReference type="KEGG" id="lsp:Bsph_4610"/>
<dbReference type="HOGENOM" id="CLU_144911_0_1_9"/>
<dbReference type="Proteomes" id="UP000002164">
    <property type="component" value="Chromosome"/>
</dbReference>
<dbReference type="GO" id="GO:0005737">
    <property type="term" value="C:cytoplasm"/>
    <property type="evidence" value="ECO:0007669"/>
    <property type="project" value="UniProtKB-ARBA"/>
</dbReference>
<dbReference type="GO" id="GO:0015935">
    <property type="term" value="C:small ribosomal subunit"/>
    <property type="evidence" value="ECO:0007669"/>
    <property type="project" value="InterPro"/>
</dbReference>
<dbReference type="GO" id="GO:0019843">
    <property type="term" value="F:rRNA binding"/>
    <property type="evidence" value="ECO:0007669"/>
    <property type="project" value="UniProtKB-UniRule"/>
</dbReference>
<dbReference type="GO" id="GO:0003735">
    <property type="term" value="F:structural constituent of ribosome"/>
    <property type="evidence" value="ECO:0007669"/>
    <property type="project" value="InterPro"/>
</dbReference>
<dbReference type="GO" id="GO:0000028">
    <property type="term" value="P:ribosomal small subunit assembly"/>
    <property type="evidence" value="ECO:0007669"/>
    <property type="project" value="TreeGrafter"/>
</dbReference>
<dbReference type="GO" id="GO:0006412">
    <property type="term" value="P:translation"/>
    <property type="evidence" value="ECO:0007669"/>
    <property type="project" value="UniProtKB-UniRule"/>
</dbReference>
<dbReference type="FunFam" id="3.30.860.10:FF:000001">
    <property type="entry name" value="30S ribosomal protein S19"/>
    <property type="match status" value="1"/>
</dbReference>
<dbReference type="Gene3D" id="3.30.860.10">
    <property type="entry name" value="30s Ribosomal Protein S19, Chain A"/>
    <property type="match status" value="1"/>
</dbReference>
<dbReference type="HAMAP" id="MF_00531">
    <property type="entry name" value="Ribosomal_uS19"/>
    <property type="match status" value="1"/>
</dbReference>
<dbReference type="InterPro" id="IPR002222">
    <property type="entry name" value="Ribosomal_uS19"/>
</dbReference>
<dbReference type="InterPro" id="IPR005732">
    <property type="entry name" value="Ribosomal_uS19_bac-type"/>
</dbReference>
<dbReference type="InterPro" id="IPR020934">
    <property type="entry name" value="Ribosomal_uS19_CS"/>
</dbReference>
<dbReference type="InterPro" id="IPR023575">
    <property type="entry name" value="Ribosomal_uS19_SF"/>
</dbReference>
<dbReference type="NCBIfam" id="TIGR01050">
    <property type="entry name" value="rpsS_bact"/>
    <property type="match status" value="1"/>
</dbReference>
<dbReference type="PANTHER" id="PTHR11880">
    <property type="entry name" value="RIBOSOMAL PROTEIN S19P FAMILY MEMBER"/>
    <property type="match status" value="1"/>
</dbReference>
<dbReference type="PANTHER" id="PTHR11880:SF8">
    <property type="entry name" value="SMALL RIBOSOMAL SUBUNIT PROTEIN US19M"/>
    <property type="match status" value="1"/>
</dbReference>
<dbReference type="Pfam" id="PF00203">
    <property type="entry name" value="Ribosomal_S19"/>
    <property type="match status" value="1"/>
</dbReference>
<dbReference type="PIRSF" id="PIRSF002144">
    <property type="entry name" value="Ribosomal_S19"/>
    <property type="match status" value="1"/>
</dbReference>
<dbReference type="PRINTS" id="PR00975">
    <property type="entry name" value="RIBOSOMALS19"/>
</dbReference>
<dbReference type="SUPFAM" id="SSF54570">
    <property type="entry name" value="Ribosomal protein S19"/>
    <property type="match status" value="1"/>
</dbReference>
<dbReference type="PROSITE" id="PS00323">
    <property type="entry name" value="RIBOSOMAL_S19"/>
    <property type="match status" value="1"/>
</dbReference>
<feature type="chain" id="PRO_1000127999" description="Small ribosomal subunit protein uS19">
    <location>
        <begin position="1"/>
        <end position="92"/>
    </location>
</feature>
<protein>
    <recommendedName>
        <fullName evidence="1">Small ribosomal subunit protein uS19</fullName>
    </recommendedName>
    <alternativeName>
        <fullName evidence="2">30S ribosomal protein S19</fullName>
    </alternativeName>
</protein>